<reference key="1">
    <citation type="submission" date="2003-10" db="EMBL/GenBank/DDBJ databases">
        <title>The complete genome sequence of the alkaliphilic Bacillus clausii KSM-K16.</title>
        <authorList>
            <person name="Takaki Y."/>
            <person name="Kageyama Y."/>
            <person name="Shimamura S."/>
            <person name="Suzuki H."/>
            <person name="Nishi S."/>
            <person name="Hatada Y."/>
            <person name="Kawai S."/>
            <person name="Ito S."/>
            <person name="Horikoshi K."/>
        </authorList>
    </citation>
    <scope>NUCLEOTIDE SEQUENCE [LARGE SCALE GENOMIC DNA]</scope>
    <source>
        <strain>KSM-K16</strain>
    </source>
</reference>
<sequence length="213" mass="23543">MTLTMAMPKGRIFEEAVQLLRSAGYNLPSSFEQSRKLIIDVPNESLRFILAKPMDVPTYVEHGVADVGVAGKDVMLEEKRDVHEVLDLNISACHLAVAALPTYQRGELNPKVASKYPNVASQFFKEQGEQVEIIKLNGSIELAPIMGLAGRIVDIVSTGQTLKENGLVELEQIRKITSRFIVNPASYRMRAGEIHDMVERLATVIEGDGSEDH</sequence>
<evidence type="ECO:0000255" key="1">
    <source>
        <dbReference type="HAMAP-Rule" id="MF_01018"/>
    </source>
</evidence>
<feature type="chain" id="PRO_0000229304" description="ATP phosphoribosyltransferase">
    <location>
        <begin position="1"/>
        <end position="213"/>
    </location>
</feature>
<gene>
    <name evidence="1" type="primary">hisG</name>
    <name type="ordered locus">ABC3049</name>
</gene>
<protein>
    <recommendedName>
        <fullName evidence="1">ATP phosphoribosyltransferase</fullName>
        <shortName evidence="1">ATP-PRT</shortName>
        <shortName evidence="1">ATP-PRTase</shortName>
        <ecNumber evidence="1">2.4.2.17</ecNumber>
    </recommendedName>
</protein>
<proteinExistence type="inferred from homology"/>
<organism>
    <name type="scientific">Shouchella clausii (strain KSM-K16)</name>
    <name type="common">Alkalihalobacillus clausii</name>
    <dbReference type="NCBI Taxonomy" id="66692"/>
    <lineage>
        <taxon>Bacteria</taxon>
        <taxon>Bacillati</taxon>
        <taxon>Bacillota</taxon>
        <taxon>Bacilli</taxon>
        <taxon>Bacillales</taxon>
        <taxon>Bacillaceae</taxon>
        <taxon>Shouchella</taxon>
    </lineage>
</organism>
<keyword id="KW-0028">Amino-acid biosynthesis</keyword>
<keyword id="KW-0067">ATP-binding</keyword>
<keyword id="KW-0963">Cytoplasm</keyword>
<keyword id="KW-0328">Glycosyltransferase</keyword>
<keyword id="KW-0368">Histidine biosynthesis</keyword>
<keyword id="KW-0547">Nucleotide-binding</keyword>
<keyword id="KW-1185">Reference proteome</keyword>
<keyword id="KW-0808">Transferase</keyword>
<name>HIS1_SHOC1</name>
<accession>Q5WDH7</accession>
<dbReference type="EC" id="2.4.2.17" evidence="1"/>
<dbReference type="EMBL" id="AP006627">
    <property type="protein sequence ID" value="BAD65583.1"/>
    <property type="molecule type" value="Genomic_DNA"/>
</dbReference>
<dbReference type="RefSeq" id="WP_011247891.1">
    <property type="nucleotide sequence ID" value="NC_006582.1"/>
</dbReference>
<dbReference type="SMR" id="Q5WDH7"/>
<dbReference type="STRING" id="66692.ABC3049"/>
<dbReference type="KEGG" id="bcl:ABC3049"/>
<dbReference type="eggNOG" id="COG0040">
    <property type="taxonomic scope" value="Bacteria"/>
</dbReference>
<dbReference type="HOGENOM" id="CLU_038115_2_0_9"/>
<dbReference type="OrthoDB" id="9801867at2"/>
<dbReference type="UniPathway" id="UPA00031">
    <property type="reaction ID" value="UER00006"/>
</dbReference>
<dbReference type="Proteomes" id="UP000001168">
    <property type="component" value="Chromosome"/>
</dbReference>
<dbReference type="GO" id="GO:0005737">
    <property type="term" value="C:cytoplasm"/>
    <property type="evidence" value="ECO:0007669"/>
    <property type="project" value="UniProtKB-SubCell"/>
</dbReference>
<dbReference type="GO" id="GO:0005524">
    <property type="term" value="F:ATP binding"/>
    <property type="evidence" value="ECO:0007669"/>
    <property type="project" value="UniProtKB-KW"/>
</dbReference>
<dbReference type="GO" id="GO:0003879">
    <property type="term" value="F:ATP phosphoribosyltransferase activity"/>
    <property type="evidence" value="ECO:0007669"/>
    <property type="project" value="UniProtKB-UniRule"/>
</dbReference>
<dbReference type="GO" id="GO:0000105">
    <property type="term" value="P:L-histidine biosynthetic process"/>
    <property type="evidence" value="ECO:0007669"/>
    <property type="project" value="UniProtKB-UniRule"/>
</dbReference>
<dbReference type="CDD" id="cd13595">
    <property type="entry name" value="PBP2_HisGs"/>
    <property type="match status" value="1"/>
</dbReference>
<dbReference type="FunFam" id="3.40.190.10:FF:000008">
    <property type="entry name" value="ATP phosphoribosyltransferase"/>
    <property type="match status" value="1"/>
</dbReference>
<dbReference type="FunFam" id="3.40.190.10:FF:000011">
    <property type="entry name" value="ATP phosphoribosyltransferase"/>
    <property type="match status" value="1"/>
</dbReference>
<dbReference type="Gene3D" id="3.40.190.10">
    <property type="entry name" value="Periplasmic binding protein-like II"/>
    <property type="match status" value="2"/>
</dbReference>
<dbReference type="HAMAP" id="MF_01018">
    <property type="entry name" value="HisG_Short"/>
    <property type="match status" value="1"/>
</dbReference>
<dbReference type="InterPro" id="IPR013820">
    <property type="entry name" value="ATP_PRibTrfase_cat"/>
</dbReference>
<dbReference type="InterPro" id="IPR018198">
    <property type="entry name" value="ATP_PRibTrfase_CS"/>
</dbReference>
<dbReference type="InterPro" id="IPR001348">
    <property type="entry name" value="ATP_PRibTrfase_HisG"/>
</dbReference>
<dbReference type="InterPro" id="IPR024893">
    <property type="entry name" value="ATP_PRibTrfase_HisG_short"/>
</dbReference>
<dbReference type="NCBIfam" id="TIGR00070">
    <property type="entry name" value="hisG"/>
    <property type="match status" value="1"/>
</dbReference>
<dbReference type="PANTHER" id="PTHR21403:SF8">
    <property type="entry name" value="ATP PHOSPHORIBOSYLTRANSFERASE"/>
    <property type="match status" value="1"/>
</dbReference>
<dbReference type="PANTHER" id="PTHR21403">
    <property type="entry name" value="ATP PHOSPHORIBOSYLTRANSFERASE ATP-PRTASE"/>
    <property type="match status" value="1"/>
</dbReference>
<dbReference type="Pfam" id="PF01634">
    <property type="entry name" value="HisG"/>
    <property type="match status" value="1"/>
</dbReference>
<dbReference type="SUPFAM" id="SSF53850">
    <property type="entry name" value="Periplasmic binding protein-like II"/>
    <property type="match status" value="1"/>
</dbReference>
<dbReference type="PROSITE" id="PS01316">
    <property type="entry name" value="ATP_P_PHORIBOSYLTR"/>
    <property type="match status" value="1"/>
</dbReference>
<comment type="function">
    <text evidence="1">Catalyzes the condensation of ATP and 5-phosphoribose 1-diphosphate to form N'-(5'-phosphoribosyl)-ATP (PR-ATP). Has a crucial role in the pathway because the rate of histidine biosynthesis seems to be controlled primarily by regulation of HisG enzymatic activity.</text>
</comment>
<comment type="catalytic activity">
    <reaction evidence="1">
        <text>1-(5-phospho-beta-D-ribosyl)-ATP + diphosphate = 5-phospho-alpha-D-ribose 1-diphosphate + ATP</text>
        <dbReference type="Rhea" id="RHEA:18473"/>
        <dbReference type="ChEBI" id="CHEBI:30616"/>
        <dbReference type="ChEBI" id="CHEBI:33019"/>
        <dbReference type="ChEBI" id="CHEBI:58017"/>
        <dbReference type="ChEBI" id="CHEBI:73183"/>
        <dbReference type="EC" id="2.4.2.17"/>
    </reaction>
</comment>
<comment type="pathway">
    <text evidence="1">Amino-acid biosynthesis; L-histidine biosynthesis; L-histidine from 5-phospho-alpha-D-ribose 1-diphosphate: step 1/9.</text>
</comment>
<comment type="subunit">
    <text evidence="1">Heteromultimer composed of HisG and HisZ subunits.</text>
</comment>
<comment type="subcellular location">
    <subcellularLocation>
        <location evidence="1">Cytoplasm</location>
    </subcellularLocation>
</comment>
<comment type="domain">
    <text>Lacks the C-terminal regulatory region which is replaced by HisZ.</text>
</comment>
<comment type="similarity">
    <text evidence="1">Belongs to the ATP phosphoribosyltransferase family. Short subfamily.</text>
</comment>